<organism>
    <name type="scientific">Deinococcus radiodurans (strain ATCC 13939 / DSM 20539 / JCM 16871 / CCUG 27074 / LMG 4051 / NBRC 15346 / NCIMB 9279 / VKM B-1422 / R1)</name>
    <dbReference type="NCBI Taxonomy" id="243230"/>
    <lineage>
        <taxon>Bacteria</taxon>
        <taxon>Thermotogati</taxon>
        <taxon>Deinococcota</taxon>
        <taxon>Deinococci</taxon>
        <taxon>Deinococcales</taxon>
        <taxon>Deinococcaceae</taxon>
        <taxon>Deinococcus</taxon>
    </lineage>
</organism>
<name>RRAAH_DEIRA</name>
<proteinExistence type="inferred from homology"/>
<accession>Q9RW10</accession>
<reference key="1">
    <citation type="journal article" date="1999" name="Science">
        <title>Genome sequence of the radioresistant bacterium Deinococcus radiodurans R1.</title>
        <authorList>
            <person name="White O."/>
            <person name="Eisen J.A."/>
            <person name="Heidelberg J.F."/>
            <person name="Hickey E.K."/>
            <person name="Peterson J.D."/>
            <person name="Dodson R.J."/>
            <person name="Haft D.H."/>
            <person name="Gwinn M.L."/>
            <person name="Nelson W.C."/>
            <person name="Richardson D.L."/>
            <person name="Moffat K.S."/>
            <person name="Qin H."/>
            <person name="Jiang L."/>
            <person name="Pamphile W."/>
            <person name="Crosby M."/>
            <person name="Shen M."/>
            <person name="Vamathevan J.J."/>
            <person name="Lam P."/>
            <person name="McDonald L.A."/>
            <person name="Utterback T.R."/>
            <person name="Zalewski C."/>
            <person name="Makarova K.S."/>
            <person name="Aravind L."/>
            <person name="Daly M.J."/>
            <person name="Minton K.W."/>
            <person name="Fleischmann R.D."/>
            <person name="Ketchum K.A."/>
            <person name="Nelson K.E."/>
            <person name="Salzberg S.L."/>
            <person name="Smith H.O."/>
            <person name="Venter J.C."/>
            <person name="Fraser C.M."/>
        </authorList>
    </citation>
    <scope>NUCLEOTIDE SEQUENCE [LARGE SCALE GENOMIC DNA]</scope>
    <source>
        <strain>ATCC 13939 / DSM 20539 / JCM 16871 / CCUG 27074 / LMG 4051 / NBRC 15346 / NCIMB 9279 / VKM B-1422 / R1</strain>
    </source>
</reference>
<feature type="chain" id="PRO_0000209610" description="Putative 4-hydroxy-4-methyl-2-oxoglutarate aldolase">
    <location>
        <begin position="1"/>
        <end position="160"/>
    </location>
</feature>
<feature type="binding site" evidence="1">
    <location>
        <begin position="76"/>
        <end position="79"/>
    </location>
    <ligand>
        <name>substrate</name>
    </ligand>
</feature>
<feature type="binding site" evidence="1">
    <location>
        <position position="98"/>
    </location>
    <ligand>
        <name>substrate</name>
    </ligand>
</feature>
<feature type="binding site" evidence="1">
    <location>
        <position position="99"/>
    </location>
    <ligand>
        <name>a divalent metal cation</name>
        <dbReference type="ChEBI" id="CHEBI:60240"/>
    </ligand>
</feature>
<gene>
    <name type="ordered locus">DR_0859</name>
</gene>
<protein>
    <recommendedName>
        <fullName>Putative 4-hydroxy-4-methyl-2-oxoglutarate aldolase</fullName>
        <shortName>HMG aldolase</shortName>
        <ecNumber>4.1.3.17</ecNumber>
    </recommendedName>
    <alternativeName>
        <fullName>Oxaloacetate decarboxylase</fullName>
        <shortName>OAA decarboxylase</shortName>
        <ecNumber>4.1.1.112</ecNumber>
    </alternativeName>
    <alternativeName>
        <fullName>Regulator of ribonuclease activity homolog</fullName>
    </alternativeName>
    <alternativeName>
        <fullName>RraA-like protein</fullName>
    </alternativeName>
</protein>
<evidence type="ECO:0000250" key="1"/>
<evidence type="ECO:0000305" key="2"/>
<comment type="function">
    <text evidence="1">Catalyzes the aldol cleavage of 4-hydroxy-4-methyl-2-oxoglutarate (HMG) into 2 molecules of pyruvate. Also contains a secondary oxaloacetate (OAA) decarboxylase activity due to the common pyruvate enolate transition state formed following C-C bond cleavage in the retro-aldol and decarboxylation reactions (By similarity).</text>
</comment>
<comment type="catalytic activity">
    <reaction>
        <text>4-hydroxy-4-methyl-2-oxoglutarate = 2 pyruvate</text>
        <dbReference type="Rhea" id="RHEA:22748"/>
        <dbReference type="ChEBI" id="CHEBI:15361"/>
        <dbReference type="ChEBI" id="CHEBI:58276"/>
        <dbReference type="EC" id="4.1.3.17"/>
    </reaction>
</comment>
<comment type="catalytic activity">
    <reaction>
        <text>oxaloacetate + H(+) = pyruvate + CO2</text>
        <dbReference type="Rhea" id="RHEA:15641"/>
        <dbReference type="ChEBI" id="CHEBI:15361"/>
        <dbReference type="ChEBI" id="CHEBI:15378"/>
        <dbReference type="ChEBI" id="CHEBI:16452"/>
        <dbReference type="ChEBI" id="CHEBI:16526"/>
        <dbReference type="EC" id="4.1.1.112"/>
    </reaction>
</comment>
<comment type="cofactor">
    <cofactor evidence="1">
        <name>a divalent metal cation</name>
        <dbReference type="ChEBI" id="CHEBI:60240"/>
    </cofactor>
    <text evidence="1">Divalent metal cation.</text>
</comment>
<comment type="subunit">
    <text evidence="1">Homotrimer.</text>
</comment>
<comment type="similarity">
    <text evidence="2">Belongs to the class II aldolase/RraA-like family.</text>
</comment>
<dbReference type="EC" id="4.1.3.17"/>
<dbReference type="EC" id="4.1.1.112"/>
<dbReference type="EMBL" id="AE000513">
    <property type="protein sequence ID" value="AAF10437.1"/>
    <property type="molecule type" value="Genomic_DNA"/>
</dbReference>
<dbReference type="PIR" id="A75466">
    <property type="entry name" value="A75466"/>
</dbReference>
<dbReference type="RefSeq" id="NP_294583.1">
    <property type="nucleotide sequence ID" value="NC_001263.1"/>
</dbReference>
<dbReference type="RefSeq" id="WP_010887505.1">
    <property type="nucleotide sequence ID" value="NC_001263.1"/>
</dbReference>
<dbReference type="SMR" id="Q9RW10"/>
<dbReference type="STRING" id="243230.DR_0859"/>
<dbReference type="PaxDb" id="243230-DR_0859"/>
<dbReference type="EnsemblBacteria" id="AAF10437">
    <property type="protein sequence ID" value="AAF10437"/>
    <property type="gene ID" value="DR_0859"/>
</dbReference>
<dbReference type="GeneID" id="69517105"/>
<dbReference type="KEGG" id="dra:DR_0859"/>
<dbReference type="PATRIC" id="fig|243230.17.peg.1043"/>
<dbReference type="eggNOG" id="COG0684">
    <property type="taxonomic scope" value="Bacteria"/>
</dbReference>
<dbReference type="HOGENOM" id="CLU_072626_4_0_0"/>
<dbReference type="InParanoid" id="Q9RW10"/>
<dbReference type="OrthoDB" id="9784786at2"/>
<dbReference type="Proteomes" id="UP000002524">
    <property type="component" value="Chromosome 1"/>
</dbReference>
<dbReference type="GO" id="GO:0047443">
    <property type="term" value="F:4-hydroxy-4-methyl-2-oxoglutarate aldolase activity"/>
    <property type="evidence" value="ECO:0007669"/>
    <property type="project" value="UniProtKB-EC"/>
</dbReference>
<dbReference type="GO" id="GO:0046872">
    <property type="term" value="F:metal ion binding"/>
    <property type="evidence" value="ECO:0007669"/>
    <property type="project" value="UniProtKB-KW"/>
</dbReference>
<dbReference type="GO" id="GO:0008948">
    <property type="term" value="F:oxaloacetate decarboxylase activity"/>
    <property type="evidence" value="ECO:0007669"/>
    <property type="project" value="UniProtKB-EC"/>
</dbReference>
<dbReference type="GO" id="GO:0008428">
    <property type="term" value="F:ribonuclease inhibitor activity"/>
    <property type="evidence" value="ECO:0007669"/>
    <property type="project" value="InterPro"/>
</dbReference>
<dbReference type="GO" id="GO:0051252">
    <property type="term" value="P:regulation of RNA metabolic process"/>
    <property type="evidence" value="ECO:0007669"/>
    <property type="project" value="InterPro"/>
</dbReference>
<dbReference type="CDD" id="cd16841">
    <property type="entry name" value="RraA_family"/>
    <property type="match status" value="1"/>
</dbReference>
<dbReference type="Gene3D" id="3.50.30.40">
    <property type="entry name" value="Ribonuclease E inhibitor RraA/RraA-like"/>
    <property type="match status" value="1"/>
</dbReference>
<dbReference type="InterPro" id="IPR010203">
    <property type="entry name" value="RraA"/>
</dbReference>
<dbReference type="InterPro" id="IPR005493">
    <property type="entry name" value="RraA/RraA-like"/>
</dbReference>
<dbReference type="InterPro" id="IPR036704">
    <property type="entry name" value="RraA/RraA-like_sf"/>
</dbReference>
<dbReference type="NCBIfam" id="TIGR01935">
    <property type="entry name" value="NOT-MenG"/>
    <property type="match status" value="1"/>
</dbReference>
<dbReference type="NCBIfam" id="NF006875">
    <property type="entry name" value="PRK09372.1"/>
    <property type="match status" value="1"/>
</dbReference>
<dbReference type="PANTHER" id="PTHR33254">
    <property type="entry name" value="4-HYDROXY-4-METHYL-2-OXOGLUTARATE ALDOLASE 3-RELATED"/>
    <property type="match status" value="1"/>
</dbReference>
<dbReference type="PANTHER" id="PTHR33254:SF4">
    <property type="entry name" value="4-HYDROXY-4-METHYL-2-OXOGLUTARATE ALDOLASE 3-RELATED"/>
    <property type="match status" value="1"/>
</dbReference>
<dbReference type="Pfam" id="PF03737">
    <property type="entry name" value="RraA-like"/>
    <property type="match status" value="1"/>
</dbReference>
<dbReference type="SUPFAM" id="SSF89562">
    <property type="entry name" value="RraA-like"/>
    <property type="match status" value="1"/>
</dbReference>
<sequence length="160" mass="16860">MTDFIPTTDLSDAQPQAQVAAPVLRDFGGRTRFQGAAVTLRISENNPLVRQTLQTPGAGRVLVVDGGGSLNCALLGGNLGVFGVENGWEGVIIHGCVRDTAELRELDLGIRALAAHPRRSGKLEEGERDVPVTFAGVTIRPGDHVVADEDGWLVLGAESP</sequence>
<keyword id="KW-0456">Lyase</keyword>
<keyword id="KW-0479">Metal-binding</keyword>
<keyword id="KW-1185">Reference proteome</keyword>